<dbReference type="EMBL" id="BX465190">
    <property type="protein sequence ID" value="CAK05137.2"/>
    <property type="molecule type" value="Genomic_DNA"/>
</dbReference>
<dbReference type="EMBL" id="BX957240">
    <property type="protein sequence ID" value="CAK11014.1"/>
    <property type="molecule type" value="Genomic_DNA"/>
</dbReference>
<dbReference type="EMBL" id="BC095639">
    <property type="protein sequence ID" value="AAH95639.1"/>
    <property type="molecule type" value="mRNA"/>
</dbReference>
<dbReference type="RefSeq" id="NP_001018596.1">
    <property type="nucleotide sequence ID" value="NM_001020760.1"/>
</dbReference>
<dbReference type="SMR" id="Q502M6"/>
<dbReference type="FunCoup" id="Q502M6">
    <property type="interactions" value="742"/>
</dbReference>
<dbReference type="STRING" id="7955.ENSDARP00000006025"/>
<dbReference type="PaxDb" id="7955-ENSDARP00000006025"/>
<dbReference type="Ensembl" id="ENSDART00000009360">
    <property type="protein sequence ID" value="ENSDARP00000006025"/>
    <property type="gene ID" value="ENSDARG00000057159"/>
</dbReference>
<dbReference type="Ensembl" id="ENSDART00000186316">
    <property type="protein sequence ID" value="ENSDARP00000153547"/>
    <property type="gene ID" value="ENSDARG00000112325"/>
</dbReference>
<dbReference type="GeneID" id="553798"/>
<dbReference type="KEGG" id="dre:553798"/>
<dbReference type="AGR" id="ZFIN:ZDB-GENE-050208-655"/>
<dbReference type="CTD" id="147463"/>
<dbReference type="ZFIN" id="ZDB-GENE-050208-655">
    <property type="gene designation" value="ankrd29"/>
</dbReference>
<dbReference type="eggNOG" id="KOG0504">
    <property type="taxonomic scope" value="Eukaryota"/>
</dbReference>
<dbReference type="HOGENOM" id="CLU_000134_18_0_1"/>
<dbReference type="InParanoid" id="Q502M6"/>
<dbReference type="OMA" id="YVNNRNY"/>
<dbReference type="OrthoDB" id="7464126at2759"/>
<dbReference type="PhylomeDB" id="Q502M6"/>
<dbReference type="TreeFam" id="TF351375"/>
<dbReference type="PRO" id="PR:Q502M6"/>
<dbReference type="Proteomes" id="UP000000437">
    <property type="component" value="Alternate scaffold 22"/>
</dbReference>
<dbReference type="Proteomes" id="UP000000437">
    <property type="component" value="Chromosome 22"/>
</dbReference>
<dbReference type="Bgee" id="ENSDARG00000057159">
    <property type="expression patterns" value="Expressed in muscle tissue and 15 other cell types or tissues"/>
</dbReference>
<dbReference type="Gene3D" id="1.25.40.20">
    <property type="entry name" value="Ankyrin repeat-containing domain"/>
    <property type="match status" value="2"/>
</dbReference>
<dbReference type="InterPro" id="IPR050663">
    <property type="entry name" value="Ankyrin-SOCS_Box"/>
</dbReference>
<dbReference type="InterPro" id="IPR002110">
    <property type="entry name" value="Ankyrin_rpt"/>
</dbReference>
<dbReference type="InterPro" id="IPR036770">
    <property type="entry name" value="Ankyrin_rpt-contain_sf"/>
</dbReference>
<dbReference type="PANTHER" id="PTHR24193:SF121">
    <property type="entry name" value="ADA2A-CONTAINING COMPLEX COMPONENT 3, ISOFORM D"/>
    <property type="match status" value="1"/>
</dbReference>
<dbReference type="PANTHER" id="PTHR24193">
    <property type="entry name" value="ANKYRIN REPEAT PROTEIN"/>
    <property type="match status" value="1"/>
</dbReference>
<dbReference type="Pfam" id="PF00023">
    <property type="entry name" value="Ank"/>
    <property type="match status" value="2"/>
</dbReference>
<dbReference type="Pfam" id="PF12796">
    <property type="entry name" value="Ank_2"/>
    <property type="match status" value="2"/>
</dbReference>
<dbReference type="PRINTS" id="PR01415">
    <property type="entry name" value="ANKYRIN"/>
</dbReference>
<dbReference type="SMART" id="SM00248">
    <property type="entry name" value="ANK"/>
    <property type="match status" value="8"/>
</dbReference>
<dbReference type="SUPFAM" id="SSF48403">
    <property type="entry name" value="Ankyrin repeat"/>
    <property type="match status" value="1"/>
</dbReference>
<dbReference type="PROSITE" id="PS50297">
    <property type="entry name" value="ANK_REP_REGION"/>
    <property type="match status" value="1"/>
</dbReference>
<dbReference type="PROSITE" id="PS50088">
    <property type="entry name" value="ANK_REPEAT"/>
    <property type="match status" value="6"/>
</dbReference>
<protein>
    <recommendedName>
        <fullName>Ankyrin repeat domain-containing protein 29</fullName>
    </recommendedName>
</protein>
<gene>
    <name type="primary">ankrd29</name>
    <name type="ORF">si:dkey-121a11.5</name>
    <name type="ORF">zgc:111996</name>
</gene>
<feature type="chain" id="PRO_0000243904" description="Ankyrin repeat domain-containing protein 29">
    <location>
        <begin position="1"/>
        <end position="298"/>
    </location>
</feature>
<feature type="repeat" description="ANK 1">
    <location>
        <begin position="8"/>
        <end position="38"/>
    </location>
</feature>
<feature type="repeat" description="ANK 2">
    <location>
        <begin position="42"/>
        <end position="71"/>
    </location>
</feature>
<feature type="repeat" description="ANK 3">
    <location>
        <begin position="75"/>
        <end position="104"/>
    </location>
</feature>
<feature type="repeat" description="ANK 4">
    <location>
        <begin position="108"/>
        <end position="137"/>
    </location>
</feature>
<feature type="repeat" description="ANK 5">
    <location>
        <begin position="141"/>
        <end position="170"/>
    </location>
</feature>
<feature type="repeat" description="ANK 6">
    <location>
        <begin position="174"/>
        <end position="203"/>
    </location>
</feature>
<feature type="repeat" description="ANK 7">
    <location>
        <begin position="207"/>
        <end position="236"/>
    </location>
</feature>
<feature type="repeat" description="ANK 8">
    <location>
        <begin position="239"/>
        <end position="268"/>
    </location>
</feature>
<accession>Q502M6</accession>
<accession>Q1LXE9</accession>
<sequence>MSFKKETPLANAVFWAARKGNLALLQLLLNSGRVDVDCKDAYGTTALMVASYSGHYECVRELIMQGADINLQRETGSTALFFASQQGHNEIVKLLFEFGASTEFQTKDGGTALCAACQFGHSRVVDTLLKNGANVHDQLNDGATALFLASQEGHVNLIRQLLSSGAKVNQPREDGTAPLWMAAQMGHSEVVKVLLLRGADRDADRKDGSTALFKAAHKGHCSVMEELLKFSPSLGILKNGSTALHAAVMGGSLKAVDLLLKANADPALPNTNNELPRDLTKSERILRVLRLPLMNGES</sequence>
<organism>
    <name type="scientific">Danio rerio</name>
    <name type="common">Zebrafish</name>
    <name type="synonym">Brachydanio rerio</name>
    <dbReference type="NCBI Taxonomy" id="7955"/>
    <lineage>
        <taxon>Eukaryota</taxon>
        <taxon>Metazoa</taxon>
        <taxon>Chordata</taxon>
        <taxon>Craniata</taxon>
        <taxon>Vertebrata</taxon>
        <taxon>Euteleostomi</taxon>
        <taxon>Actinopterygii</taxon>
        <taxon>Neopterygii</taxon>
        <taxon>Teleostei</taxon>
        <taxon>Ostariophysi</taxon>
        <taxon>Cypriniformes</taxon>
        <taxon>Danionidae</taxon>
        <taxon>Danioninae</taxon>
        <taxon>Danio</taxon>
    </lineage>
</organism>
<keyword id="KW-0040">ANK repeat</keyword>
<keyword id="KW-1185">Reference proteome</keyword>
<keyword id="KW-0677">Repeat</keyword>
<proteinExistence type="evidence at transcript level"/>
<reference key="1">
    <citation type="journal article" date="2013" name="Nature">
        <title>The zebrafish reference genome sequence and its relationship to the human genome.</title>
        <authorList>
            <person name="Howe K."/>
            <person name="Clark M.D."/>
            <person name="Torroja C.F."/>
            <person name="Torrance J."/>
            <person name="Berthelot C."/>
            <person name="Muffato M."/>
            <person name="Collins J.E."/>
            <person name="Humphray S."/>
            <person name="McLaren K."/>
            <person name="Matthews L."/>
            <person name="McLaren S."/>
            <person name="Sealy I."/>
            <person name="Caccamo M."/>
            <person name="Churcher C."/>
            <person name="Scott C."/>
            <person name="Barrett J.C."/>
            <person name="Koch R."/>
            <person name="Rauch G.J."/>
            <person name="White S."/>
            <person name="Chow W."/>
            <person name="Kilian B."/>
            <person name="Quintais L.T."/>
            <person name="Guerra-Assuncao J.A."/>
            <person name="Zhou Y."/>
            <person name="Gu Y."/>
            <person name="Yen J."/>
            <person name="Vogel J.H."/>
            <person name="Eyre T."/>
            <person name="Redmond S."/>
            <person name="Banerjee R."/>
            <person name="Chi J."/>
            <person name="Fu B."/>
            <person name="Langley E."/>
            <person name="Maguire S.F."/>
            <person name="Laird G.K."/>
            <person name="Lloyd D."/>
            <person name="Kenyon E."/>
            <person name="Donaldson S."/>
            <person name="Sehra H."/>
            <person name="Almeida-King J."/>
            <person name="Loveland J."/>
            <person name="Trevanion S."/>
            <person name="Jones M."/>
            <person name="Quail M."/>
            <person name="Willey D."/>
            <person name="Hunt A."/>
            <person name="Burton J."/>
            <person name="Sims S."/>
            <person name="McLay K."/>
            <person name="Plumb B."/>
            <person name="Davis J."/>
            <person name="Clee C."/>
            <person name="Oliver K."/>
            <person name="Clark R."/>
            <person name="Riddle C."/>
            <person name="Elliot D."/>
            <person name="Threadgold G."/>
            <person name="Harden G."/>
            <person name="Ware D."/>
            <person name="Begum S."/>
            <person name="Mortimore B."/>
            <person name="Kerry G."/>
            <person name="Heath P."/>
            <person name="Phillimore B."/>
            <person name="Tracey A."/>
            <person name="Corby N."/>
            <person name="Dunn M."/>
            <person name="Johnson C."/>
            <person name="Wood J."/>
            <person name="Clark S."/>
            <person name="Pelan S."/>
            <person name="Griffiths G."/>
            <person name="Smith M."/>
            <person name="Glithero R."/>
            <person name="Howden P."/>
            <person name="Barker N."/>
            <person name="Lloyd C."/>
            <person name="Stevens C."/>
            <person name="Harley J."/>
            <person name="Holt K."/>
            <person name="Panagiotidis G."/>
            <person name="Lovell J."/>
            <person name="Beasley H."/>
            <person name="Henderson C."/>
            <person name="Gordon D."/>
            <person name="Auger K."/>
            <person name="Wright D."/>
            <person name="Collins J."/>
            <person name="Raisen C."/>
            <person name="Dyer L."/>
            <person name="Leung K."/>
            <person name="Robertson L."/>
            <person name="Ambridge K."/>
            <person name="Leongamornlert D."/>
            <person name="McGuire S."/>
            <person name="Gilderthorp R."/>
            <person name="Griffiths C."/>
            <person name="Manthravadi D."/>
            <person name="Nichol S."/>
            <person name="Barker G."/>
            <person name="Whitehead S."/>
            <person name="Kay M."/>
            <person name="Brown J."/>
            <person name="Murnane C."/>
            <person name="Gray E."/>
            <person name="Humphries M."/>
            <person name="Sycamore N."/>
            <person name="Barker D."/>
            <person name="Saunders D."/>
            <person name="Wallis J."/>
            <person name="Babbage A."/>
            <person name="Hammond S."/>
            <person name="Mashreghi-Mohammadi M."/>
            <person name="Barr L."/>
            <person name="Martin S."/>
            <person name="Wray P."/>
            <person name="Ellington A."/>
            <person name="Matthews N."/>
            <person name="Ellwood M."/>
            <person name="Woodmansey R."/>
            <person name="Clark G."/>
            <person name="Cooper J."/>
            <person name="Tromans A."/>
            <person name="Grafham D."/>
            <person name="Skuce C."/>
            <person name="Pandian R."/>
            <person name="Andrews R."/>
            <person name="Harrison E."/>
            <person name="Kimberley A."/>
            <person name="Garnett J."/>
            <person name="Fosker N."/>
            <person name="Hall R."/>
            <person name="Garner P."/>
            <person name="Kelly D."/>
            <person name="Bird C."/>
            <person name="Palmer S."/>
            <person name="Gehring I."/>
            <person name="Berger A."/>
            <person name="Dooley C.M."/>
            <person name="Ersan-Urun Z."/>
            <person name="Eser C."/>
            <person name="Geiger H."/>
            <person name="Geisler M."/>
            <person name="Karotki L."/>
            <person name="Kirn A."/>
            <person name="Konantz J."/>
            <person name="Konantz M."/>
            <person name="Oberlander M."/>
            <person name="Rudolph-Geiger S."/>
            <person name="Teucke M."/>
            <person name="Lanz C."/>
            <person name="Raddatz G."/>
            <person name="Osoegawa K."/>
            <person name="Zhu B."/>
            <person name="Rapp A."/>
            <person name="Widaa S."/>
            <person name="Langford C."/>
            <person name="Yang F."/>
            <person name="Schuster S.C."/>
            <person name="Carter N.P."/>
            <person name="Harrow J."/>
            <person name="Ning Z."/>
            <person name="Herrero J."/>
            <person name="Searle S.M."/>
            <person name="Enright A."/>
            <person name="Geisler R."/>
            <person name="Plasterk R.H."/>
            <person name="Lee C."/>
            <person name="Westerfield M."/>
            <person name="de Jong P.J."/>
            <person name="Zon L.I."/>
            <person name="Postlethwait J.H."/>
            <person name="Nusslein-Volhard C."/>
            <person name="Hubbard T.J."/>
            <person name="Roest Crollius H."/>
            <person name="Rogers J."/>
            <person name="Stemple D.L."/>
        </authorList>
    </citation>
    <scope>NUCLEOTIDE SEQUENCE [LARGE SCALE GENOMIC DNA]</scope>
    <source>
        <strain>Tuebingen</strain>
    </source>
</reference>
<reference key="2">
    <citation type="submission" date="2005-05" db="EMBL/GenBank/DDBJ databases">
        <authorList>
            <consortium name="NIH - Zebrafish Gene Collection (ZGC) project"/>
        </authorList>
    </citation>
    <scope>NUCLEOTIDE SEQUENCE [LARGE SCALE MRNA]</scope>
    <source>
        <tissue>Olfactory epithelium</tissue>
    </source>
</reference>
<name>ANR29_DANRE</name>